<evidence type="ECO:0000255" key="1">
    <source>
        <dbReference type="HAMAP-Rule" id="MF_00020"/>
    </source>
</evidence>
<evidence type="ECO:0000305" key="2"/>
<protein>
    <recommendedName>
        <fullName evidence="1">Acetate kinase</fullName>
        <ecNumber evidence="1">2.7.2.1</ecNumber>
    </recommendedName>
    <alternativeName>
        <fullName evidence="1">Acetokinase</fullName>
    </alternativeName>
</protein>
<name>ACKA_THETC</name>
<feature type="chain" id="PRO_0000107550" description="Acetate kinase">
    <location>
        <begin position="1"/>
        <end position="400"/>
    </location>
</feature>
<feature type="active site" description="Proton donor/acceptor" evidence="1">
    <location>
        <position position="147"/>
    </location>
</feature>
<feature type="binding site" evidence="1">
    <location>
        <position position="7"/>
    </location>
    <ligand>
        <name>Mg(2+)</name>
        <dbReference type="ChEBI" id="CHEBI:18420"/>
    </ligand>
</feature>
<feature type="binding site" evidence="1">
    <location>
        <position position="14"/>
    </location>
    <ligand>
        <name>ATP</name>
        <dbReference type="ChEBI" id="CHEBI:30616"/>
    </ligand>
</feature>
<feature type="binding site" evidence="1">
    <location>
        <position position="90"/>
    </location>
    <ligand>
        <name>substrate</name>
    </ligand>
</feature>
<feature type="binding site" evidence="1">
    <location>
        <begin position="207"/>
        <end position="211"/>
    </location>
    <ligand>
        <name>ATP</name>
        <dbReference type="ChEBI" id="CHEBI:30616"/>
    </ligand>
</feature>
<feature type="binding site" evidence="1">
    <location>
        <begin position="282"/>
        <end position="284"/>
    </location>
    <ligand>
        <name>ATP</name>
        <dbReference type="ChEBI" id="CHEBI:30616"/>
    </ligand>
</feature>
<feature type="binding site" evidence="1">
    <location>
        <begin position="331"/>
        <end position="335"/>
    </location>
    <ligand>
        <name>ATP</name>
        <dbReference type="ChEBI" id="CHEBI:30616"/>
    </ligand>
</feature>
<feature type="binding site" evidence="1">
    <location>
        <position position="384"/>
    </location>
    <ligand>
        <name>Mg(2+)</name>
        <dbReference type="ChEBI" id="CHEBI:18420"/>
    </ligand>
</feature>
<feature type="site" description="Transition state stabilizer" evidence="1">
    <location>
        <position position="179"/>
    </location>
</feature>
<feature type="site" description="Transition state stabilizer" evidence="1">
    <location>
        <position position="240"/>
    </location>
</feature>
<feature type="sequence conflict" description="In Ref. 1; CAA95986." evidence="2" ref="1">
    <original>K</original>
    <variation>T</variation>
    <location>
        <position position="134"/>
    </location>
</feature>
<comment type="function">
    <text evidence="1">Catalyzes the formation of acetyl phosphate from acetate and ATP. Can also catalyze the reverse reaction.</text>
</comment>
<comment type="catalytic activity">
    <reaction evidence="1">
        <text>acetate + ATP = acetyl phosphate + ADP</text>
        <dbReference type="Rhea" id="RHEA:11352"/>
        <dbReference type="ChEBI" id="CHEBI:22191"/>
        <dbReference type="ChEBI" id="CHEBI:30089"/>
        <dbReference type="ChEBI" id="CHEBI:30616"/>
        <dbReference type="ChEBI" id="CHEBI:456216"/>
        <dbReference type="EC" id="2.7.2.1"/>
    </reaction>
</comment>
<comment type="cofactor">
    <cofactor evidence="1">
        <name>Mg(2+)</name>
        <dbReference type="ChEBI" id="CHEBI:18420"/>
    </cofactor>
    <cofactor evidence="1">
        <name>Mn(2+)</name>
        <dbReference type="ChEBI" id="CHEBI:29035"/>
    </cofactor>
    <text evidence="1">Mg(2+). Can also accept Mn(2+).</text>
</comment>
<comment type="pathway">
    <text evidence="1">Metabolic intermediate biosynthesis; acetyl-CoA biosynthesis; acetyl-CoA from acetate: step 1/2.</text>
</comment>
<comment type="subunit">
    <text evidence="1">Homodimer.</text>
</comment>
<comment type="subcellular location">
    <subcellularLocation>
        <location evidence="1">Cytoplasm</location>
    </subcellularLocation>
</comment>
<comment type="similarity">
    <text evidence="1">Belongs to the acetokinase family.</text>
</comment>
<proteinExistence type="inferred from homology"/>
<reference key="1">
    <citation type="submission" date="1996-06" db="EMBL/GenBank/DDBJ databases">
        <authorList>
            <person name="Joerges A."/>
            <person name="Bronnenmeier K."/>
            <person name="Lottspeich F."/>
            <person name="Staudenbauer W.L."/>
        </authorList>
    </citation>
    <scope>NUCLEOTIDE SEQUENCE [GENOMIC DNA]</scope>
    <source>
        <strain>ATCC 7956 / DSM 571 / NCIMB 9385 / NCA 3814 / NCTC 13789 / WDCM 00135 / 2032</strain>
    </source>
</reference>
<reference key="2">
    <citation type="submission" date="1998-03" db="EMBL/GenBank/DDBJ databases">
        <authorList>
            <person name="van Rinsum A."/>
        </authorList>
    </citation>
    <scope>NUCLEOTIDE SEQUENCE [GENOMIC DNA]</scope>
    <source>
        <strain>ATCC 7956 / DSM 571 / NCIMB 9385 / NCA 3814 / NCTC 13789 / WDCM 00135 / 2032</strain>
    </source>
</reference>
<reference key="3">
    <citation type="submission" date="2010-08" db="EMBL/GenBank/DDBJ databases">
        <title>Complete sequence of Thermoanaerobacterium thermosaccharolyticum DSM 571.</title>
        <authorList>
            <consortium name="US DOE Joint Genome Institute"/>
            <person name="Lucas S."/>
            <person name="Copeland A."/>
            <person name="Lapidus A."/>
            <person name="Cheng J.-F."/>
            <person name="Bruce D."/>
            <person name="Goodwin L."/>
            <person name="Pitluck S."/>
            <person name="Teshima H."/>
            <person name="Detter J.C."/>
            <person name="Han C."/>
            <person name="Tapia R."/>
            <person name="Land M."/>
            <person name="Hauser L."/>
            <person name="Chang Y.-J."/>
            <person name="Jeffries C."/>
            <person name="Kyrpides N."/>
            <person name="Ivanova N."/>
            <person name="Mikhailova N."/>
            <person name="Hemme C.L."/>
            <person name="Woyke T."/>
        </authorList>
    </citation>
    <scope>NUCLEOTIDE SEQUENCE [LARGE SCALE GENOMIC DNA]</scope>
    <source>
        <strain>ATCC 7956 / DSM 571 / NCIMB 9385 / NCA 3814 / NCTC 13789 / WDCM 00135 / 2032</strain>
    </source>
</reference>
<accession>Q59331</accession>
<accession>D9TNN6</accession>
<accession>O65981</accession>
<dbReference type="EC" id="2.7.2.1" evidence="1"/>
<dbReference type="EMBL" id="Z71384">
    <property type="protein sequence ID" value="CAA95986.1"/>
    <property type="molecule type" value="Genomic_DNA"/>
</dbReference>
<dbReference type="EMBL" id="AJ004870">
    <property type="protein sequence ID" value="CAA06175.1"/>
    <property type="molecule type" value="Genomic_DNA"/>
</dbReference>
<dbReference type="EMBL" id="CP002171">
    <property type="protein sequence ID" value="ADL69011.1"/>
    <property type="molecule type" value="Genomic_DNA"/>
</dbReference>
<dbReference type="RefSeq" id="WP_013297978.1">
    <property type="nucleotide sequence ID" value="NC_014410.1"/>
</dbReference>
<dbReference type="SMR" id="Q59331"/>
<dbReference type="STRING" id="580327.Tthe_1501"/>
<dbReference type="GeneID" id="93864340"/>
<dbReference type="KEGG" id="ttm:Tthe_1501"/>
<dbReference type="eggNOG" id="COG0282">
    <property type="taxonomic scope" value="Bacteria"/>
</dbReference>
<dbReference type="HOGENOM" id="CLU_020352_0_1_9"/>
<dbReference type="OrthoDB" id="9802453at2"/>
<dbReference type="UniPathway" id="UPA00340">
    <property type="reaction ID" value="UER00458"/>
</dbReference>
<dbReference type="Proteomes" id="UP000001626">
    <property type="component" value="Chromosome"/>
</dbReference>
<dbReference type="GO" id="GO:0005737">
    <property type="term" value="C:cytoplasm"/>
    <property type="evidence" value="ECO:0007669"/>
    <property type="project" value="UniProtKB-SubCell"/>
</dbReference>
<dbReference type="GO" id="GO:0008776">
    <property type="term" value="F:acetate kinase activity"/>
    <property type="evidence" value="ECO:0007669"/>
    <property type="project" value="UniProtKB-UniRule"/>
</dbReference>
<dbReference type="GO" id="GO:0005524">
    <property type="term" value="F:ATP binding"/>
    <property type="evidence" value="ECO:0007669"/>
    <property type="project" value="UniProtKB-KW"/>
</dbReference>
<dbReference type="GO" id="GO:0000287">
    <property type="term" value="F:magnesium ion binding"/>
    <property type="evidence" value="ECO:0007669"/>
    <property type="project" value="UniProtKB-UniRule"/>
</dbReference>
<dbReference type="GO" id="GO:0006083">
    <property type="term" value="P:acetate metabolic process"/>
    <property type="evidence" value="ECO:0007669"/>
    <property type="project" value="TreeGrafter"/>
</dbReference>
<dbReference type="GO" id="GO:0006085">
    <property type="term" value="P:acetyl-CoA biosynthetic process"/>
    <property type="evidence" value="ECO:0007669"/>
    <property type="project" value="UniProtKB-UniRule"/>
</dbReference>
<dbReference type="CDD" id="cd24010">
    <property type="entry name" value="ASKHA_NBD_AcK_PK"/>
    <property type="match status" value="1"/>
</dbReference>
<dbReference type="Gene3D" id="3.30.420.40">
    <property type="match status" value="2"/>
</dbReference>
<dbReference type="HAMAP" id="MF_00020">
    <property type="entry name" value="Acetate_kinase"/>
    <property type="match status" value="1"/>
</dbReference>
<dbReference type="InterPro" id="IPR004372">
    <property type="entry name" value="Ac/propionate_kinase"/>
</dbReference>
<dbReference type="InterPro" id="IPR000890">
    <property type="entry name" value="Aliphatic_acid_kin_short-chain"/>
</dbReference>
<dbReference type="InterPro" id="IPR023865">
    <property type="entry name" value="Aliphatic_acid_kinase_CS"/>
</dbReference>
<dbReference type="InterPro" id="IPR043129">
    <property type="entry name" value="ATPase_NBD"/>
</dbReference>
<dbReference type="NCBIfam" id="TIGR00016">
    <property type="entry name" value="ackA"/>
    <property type="match status" value="1"/>
</dbReference>
<dbReference type="PANTHER" id="PTHR21060">
    <property type="entry name" value="ACETATE KINASE"/>
    <property type="match status" value="1"/>
</dbReference>
<dbReference type="PANTHER" id="PTHR21060:SF15">
    <property type="entry name" value="ACETATE KINASE-RELATED"/>
    <property type="match status" value="1"/>
</dbReference>
<dbReference type="Pfam" id="PF00871">
    <property type="entry name" value="Acetate_kinase"/>
    <property type="match status" value="1"/>
</dbReference>
<dbReference type="PIRSF" id="PIRSF000722">
    <property type="entry name" value="Acetate_prop_kin"/>
    <property type="match status" value="1"/>
</dbReference>
<dbReference type="PRINTS" id="PR00471">
    <property type="entry name" value="ACETATEKNASE"/>
</dbReference>
<dbReference type="SUPFAM" id="SSF53067">
    <property type="entry name" value="Actin-like ATPase domain"/>
    <property type="match status" value="2"/>
</dbReference>
<dbReference type="PROSITE" id="PS01075">
    <property type="entry name" value="ACETATE_KINASE_1"/>
    <property type="match status" value="1"/>
</dbReference>
<dbReference type="PROSITE" id="PS01076">
    <property type="entry name" value="ACETATE_KINASE_2"/>
    <property type="match status" value="1"/>
</dbReference>
<sequence length="400" mass="43847">MKILVINCGSSSLKYQLIESKDGNVLAKGLAERIGINDSLLTHNANGEKIKIKKDMKDHKDAIKLVLDALVNSDYGVIKDMSEIDAVGHRVVHGGEYFTSSVLITDDVLKAITDCIELAPLHNPANIEGIKACKQIMPDVPMVAVFDTAFHQTMPDYAYLYPIPYEYYTKYKIRKYGFHGTSHKYVSQRAAEILNKPIESLKIITCHLGNGSSIAAVKNGKSIDTSMGFTPLEGLAMGTRSGSIDPSIISYLMEKENISAEEVVNILNKKSGVYGISGISSDFRDLEDAAFKNGDKRAQLALNVFAYRVKKTIGSYAAAMGGVDVIVFTAGIGENGPEIREFILDGLEFLGFKLDKEKNKVRGEEAIISTADSKVNVMVVPTNEEYMIAKDTEKIVESLK</sequence>
<keyword id="KW-0067">ATP-binding</keyword>
<keyword id="KW-0963">Cytoplasm</keyword>
<keyword id="KW-0418">Kinase</keyword>
<keyword id="KW-0460">Magnesium</keyword>
<keyword id="KW-0479">Metal-binding</keyword>
<keyword id="KW-0547">Nucleotide-binding</keyword>
<keyword id="KW-1185">Reference proteome</keyword>
<keyword id="KW-0808">Transferase</keyword>
<organism>
    <name type="scientific">Thermoanaerobacterium thermosaccharolyticum (strain ATCC 7956 / DSM 571 / NCIMB 9385 / NCA 3814 / NCTC 13789 / WDCM 00135 / 2032)</name>
    <name type="common">Clostridium thermosaccharolyticum</name>
    <dbReference type="NCBI Taxonomy" id="580327"/>
    <lineage>
        <taxon>Bacteria</taxon>
        <taxon>Bacillati</taxon>
        <taxon>Bacillota</taxon>
        <taxon>Clostridia</taxon>
        <taxon>Thermoanaerobacterales</taxon>
        <taxon>Thermoanaerobacteraceae</taxon>
        <taxon>Thermoanaerobacterium</taxon>
    </lineage>
</organism>
<gene>
    <name evidence="1" type="primary">ackA</name>
    <name type="ordered locus">Tthe_1501</name>
</gene>